<gene>
    <name type="primary">isaB</name>
    <name type="ordered locus">SAB2513c</name>
</gene>
<organism>
    <name type="scientific">Staphylococcus aureus (strain bovine RF122 / ET3-1)</name>
    <dbReference type="NCBI Taxonomy" id="273036"/>
    <lineage>
        <taxon>Bacteria</taxon>
        <taxon>Bacillati</taxon>
        <taxon>Bacillota</taxon>
        <taxon>Bacilli</taxon>
        <taxon>Bacillales</taxon>
        <taxon>Staphylococcaceae</taxon>
        <taxon>Staphylococcus</taxon>
    </lineage>
</organism>
<reference key="1">
    <citation type="journal article" date="2007" name="PLoS ONE">
        <title>Molecular correlates of host specialization in Staphylococcus aureus.</title>
        <authorList>
            <person name="Herron-Olson L."/>
            <person name="Fitzgerald J.R."/>
            <person name="Musser J.M."/>
            <person name="Kapur V."/>
        </authorList>
    </citation>
    <scope>NUCLEOTIDE SEQUENCE [LARGE SCALE GENOMIC DNA]</scope>
    <source>
        <strain>bovine RF122 / ET3-1</strain>
    </source>
</reference>
<protein>
    <recommendedName>
        <fullName>Immunodominant staphylococcal antigen B</fullName>
    </recommendedName>
</protein>
<dbReference type="EMBL" id="AJ938182">
    <property type="protein sequence ID" value="CAI82201.1"/>
    <property type="molecule type" value="Genomic_DNA"/>
</dbReference>
<dbReference type="RefSeq" id="WP_001044560.1">
    <property type="nucleotide sequence ID" value="NC_007622.1"/>
</dbReference>
<dbReference type="SMR" id="Q2YZ63"/>
<dbReference type="KEGG" id="sab:SAB2513c"/>
<dbReference type="HOGENOM" id="CLU_119552_0_0_9"/>
<dbReference type="GO" id="GO:0005576">
    <property type="term" value="C:extracellular region"/>
    <property type="evidence" value="ECO:0007669"/>
    <property type="project" value="UniProtKB-SubCell"/>
</dbReference>
<dbReference type="NCBIfam" id="NF047686">
    <property type="entry name" value="IsaB_fam"/>
    <property type="match status" value="1"/>
</dbReference>
<name>ISAB_STAAB</name>
<keyword id="KW-0964">Secreted</keyword>
<keyword id="KW-0732">Signal</keyword>
<sequence length="175" mass="19370">MNKTSKVCVAATLALGTLIGVTVVENSAPTSKQAQAAITPYYTYNGYIGNNANFILDKNFINAIKYDNVKFNGIKLAKTNTIKKVEKYDQTFKGVSAKGNEASQLQFVVKNNISLKDIQKAYGKDLKKENGKTKEADSGIFYYQNAKKTLGIWFVVDHNRVVEVTVGHTPYKTSK</sequence>
<proteinExistence type="inferred from homology"/>
<feature type="signal peptide" evidence="1">
    <location>
        <begin position="1"/>
        <end position="36"/>
    </location>
</feature>
<feature type="chain" id="PRO_0000272664" description="Immunodominant staphylococcal antigen B">
    <location>
        <begin position="37"/>
        <end position="175"/>
    </location>
</feature>
<evidence type="ECO:0000250" key="1"/>
<evidence type="ECO:0000305" key="2"/>
<comment type="subcellular location">
    <subcellularLocation>
        <location evidence="1">Secreted</location>
    </subcellularLocation>
</comment>
<comment type="similarity">
    <text evidence="2">Belongs to the IsaB family.</text>
</comment>
<accession>Q2YZ63</accession>